<reference key="1">
    <citation type="journal article" date="2007" name="Genome Res.">
        <title>Genome characteristics of facultatively symbiotic Frankia sp. strains reflect host range and host plant biogeography.</title>
        <authorList>
            <person name="Normand P."/>
            <person name="Lapierre P."/>
            <person name="Tisa L.S."/>
            <person name="Gogarten J.P."/>
            <person name="Alloisio N."/>
            <person name="Bagnarol E."/>
            <person name="Bassi C.A."/>
            <person name="Berry A.M."/>
            <person name="Bickhart D.M."/>
            <person name="Choisne N."/>
            <person name="Couloux A."/>
            <person name="Cournoyer B."/>
            <person name="Cruveiller S."/>
            <person name="Daubin V."/>
            <person name="Demange N."/>
            <person name="Francino M.P."/>
            <person name="Goltsman E."/>
            <person name="Huang Y."/>
            <person name="Kopp O.R."/>
            <person name="Labarre L."/>
            <person name="Lapidus A."/>
            <person name="Lavire C."/>
            <person name="Marechal J."/>
            <person name="Martinez M."/>
            <person name="Mastronunzio J.E."/>
            <person name="Mullin B.C."/>
            <person name="Niemann J."/>
            <person name="Pujic P."/>
            <person name="Rawnsley T."/>
            <person name="Rouy Z."/>
            <person name="Schenowitz C."/>
            <person name="Sellstedt A."/>
            <person name="Tavares F."/>
            <person name="Tomkins J.P."/>
            <person name="Vallenet D."/>
            <person name="Valverde C."/>
            <person name="Wall L.G."/>
            <person name="Wang Y."/>
            <person name="Medigue C."/>
            <person name="Benson D.R."/>
        </authorList>
    </citation>
    <scope>NUCLEOTIDE SEQUENCE [LARGE SCALE GENOMIC DNA]</scope>
    <source>
        <strain>DSM 45818 / CECT 9043 / HFP020203 / CcI3</strain>
    </source>
</reference>
<dbReference type="EC" id="2.7.8.7" evidence="1"/>
<dbReference type="EMBL" id="CP000249">
    <property type="protein sequence ID" value="ABD10004.1"/>
    <property type="molecule type" value="Genomic_DNA"/>
</dbReference>
<dbReference type="RefSeq" id="WP_011435073.1">
    <property type="nucleotide sequence ID" value="NZ_MSEA01000044.1"/>
</dbReference>
<dbReference type="SMR" id="Q2JFD8"/>
<dbReference type="STRING" id="106370.Francci3_0620"/>
<dbReference type="KEGG" id="fra:Francci3_0620"/>
<dbReference type="eggNOG" id="COG0736">
    <property type="taxonomic scope" value="Bacteria"/>
</dbReference>
<dbReference type="HOGENOM" id="CLU_089696_0_0_11"/>
<dbReference type="OrthoDB" id="517356at2"/>
<dbReference type="Proteomes" id="UP000001937">
    <property type="component" value="Chromosome"/>
</dbReference>
<dbReference type="GO" id="GO:0005737">
    <property type="term" value="C:cytoplasm"/>
    <property type="evidence" value="ECO:0007669"/>
    <property type="project" value="UniProtKB-SubCell"/>
</dbReference>
<dbReference type="GO" id="GO:0008897">
    <property type="term" value="F:holo-[acyl-carrier-protein] synthase activity"/>
    <property type="evidence" value="ECO:0007669"/>
    <property type="project" value="UniProtKB-UniRule"/>
</dbReference>
<dbReference type="GO" id="GO:0000287">
    <property type="term" value="F:magnesium ion binding"/>
    <property type="evidence" value="ECO:0007669"/>
    <property type="project" value="UniProtKB-UniRule"/>
</dbReference>
<dbReference type="GO" id="GO:0006633">
    <property type="term" value="P:fatty acid biosynthetic process"/>
    <property type="evidence" value="ECO:0007669"/>
    <property type="project" value="UniProtKB-UniRule"/>
</dbReference>
<dbReference type="Gene3D" id="3.90.470.20">
    <property type="entry name" value="4'-phosphopantetheinyl transferase domain"/>
    <property type="match status" value="1"/>
</dbReference>
<dbReference type="HAMAP" id="MF_00101">
    <property type="entry name" value="AcpS"/>
    <property type="match status" value="1"/>
</dbReference>
<dbReference type="InterPro" id="IPR008278">
    <property type="entry name" value="4-PPantetheinyl_Trfase_dom"/>
</dbReference>
<dbReference type="InterPro" id="IPR037143">
    <property type="entry name" value="4-PPantetheinyl_Trfase_dom_sf"/>
</dbReference>
<dbReference type="InterPro" id="IPR002582">
    <property type="entry name" value="ACPS"/>
</dbReference>
<dbReference type="InterPro" id="IPR004568">
    <property type="entry name" value="Ppantetheine-prot_Trfase_dom"/>
</dbReference>
<dbReference type="NCBIfam" id="TIGR00556">
    <property type="entry name" value="pantethn_trn"/>
    <property type="match status" value="1"/>
</dbReference>
<dbReference type="NCBIfam" id="NF000832">
    <property type="entry name" value="PRK00070.3-2"/>
    <property type="match status" value="1"/>
</dbReference>
<dbReference type="Pfam" id="PF01648">
    <property type="entry name" value="ACPS"/>
    <property type="match status" value="1"/>
</dbReference>
<dbReference type="SUPFAM" id="SSF56214">
    <property type="entry name" value="4'-phosphopantetheinyl transferase"/>
    <property type="match status" value="1"/>
</dbReference>
<proteinExistence type="inferred from homology"/>
<gene>
    <name evidence="1" type="primary">acpS</name>
    <name type="ordered locus">Francci3_0620</name>
</gene>
<keyword id="KW-0963">Cytoplasm</keyword>
<keyword id="KW-0275">Fatty acid biosynthesis</keyword>
<keyword id="KW-0276">Fatty acid metabolism</keyword>
<keyword id="KW-0444">Lipid biosynthesis</keyword>
<keyword id="KW-0443">Lipid metabolism</keyword>
<keyword id="KW-0460">Magnesium</keyword>
<keyword id="KW-0479">Metal-binding</keyword>
<keyword id="KW-1185">Reference proteome</keyword>
<keyword id="KW-0808">Transferase</keyword>
<comment type="function">
    <text evidence="1">Transfers the 4'-phosphopantetheine moiety from coenzyme A to a Ser of acyl-carrier-protein.</text>
</comment>
<comment type="catalytic activity">
    <reaction evidence="1">
        <text>apo-[ACP] + CoA = holo-[ACP] + adenosine 3',5'-bisphosphate + H(+)</text>
        <dbReference type="Rhea" id="RHEA:12068"/>
        <dbReference type="Rhea" id="RHEA-COMP:9685"/>
        <dbReference type="Rhea" id="RHEA-COMP:9690"/>
        <dbReference type="ChEBI" id="CHEBI:15378"/>
        <dbReference type="ChEBI" id="CHEBI:29999"/>
        <dbReference type="ChEBI" id="CHEBI:57287"/>
        <dbReference type="ChEBI" id="CHEBI:58343"/>
        <dbReference type="ChEBI" id="CHEBI:64479"/>
        <dbReference type="EC" id="2.7.8.7"/>
    </reaction>
</comment>
<comment type="cofactor">
    <cofactor evidence="1">
        <name>Mg(2+)</name>
        <dbReference type="ChEBI" id="CHEBI:18420"/>
    </cofactor>
</comment>
<comment type="subcellular location">
    <subcellularLocation>
        <location evidence="1">Cytoplasm</location>
    </subcellularLocation>
</comment>
<comment type="similarity">
    <text evidence="1">Belongs to the P-Pant transferase superfamily. AcpS family.</text>
</comment>
<evidence type="ECO:0000255" key="1">
    <source>
        <dbReference type="HAMAP-Rule" id="MF_00101"/>
    </source>
</evidence>
<name>ACPS_FRACC</name>
<organism>
    <name type="scientific">Frankia casuarinae (strain DSM 45818 / CECT 9043 / HFP020203 / CcI3)</name>
    <dbReference type="NCBI Taxonomy" id="106370"/>
    <lineage>
        <taxon>Bacteria</taxon>
        <taxon>Bacillati</taxon>
        <taxon>Actinomycetota</taxon>
        <taxon>Actinomycetes</taxon>
        <taxon>Frankiales</taxon>
        <taxon>Frankiaceae</taxon>
        <taxon>Frankia</taxon>
    </lineage>
</organism>
<protein>
    <recommendedName>
        <fullName evidence="1">Holo-[acyl-carrier-protein] synthase</fullName>
        <shortName evidence="1">Holo-ACP synthase</shortName>
        <ecNumber evidence="1">2.7.8.7</ecNumber>
    </recommendedName>
    <alternativeName>
        <fullName evidence="1">4'-phosphopantetheinyl transferase AcpS</fullName>
    </alternativeName>
</protein>
<feature type="chain" id="PRO_1000008427" description="Holo-[acyl-carrier-protein] synthase">
    <location>
        <begin position="1"/>
        <end position="118"/>
    </location>
</feature>
<feature type="binding site" evidence="1">
    <location>
        <position position="9"/>
    </location>
    <ligand>
        <name>Mg(2+)</name>
        <dbReference type="ChEBI" id="CHEBI:18420"/>
    </ligand>
</feature>
<feature type="binding site" evidence="1">
    <location>
        <position position="52"/>
    </location>
    <ligand>
        <name>Mg(2+)</name>
        <dbReference type="ChEBI" id="CHEBI:18420"/>
    </ligand>
</feature>
<accession>Q2JFD8</accession>
<sequence length="118" mass="12122">MAVVGVGVDVVDVDRFAATLARTPGIAMRLFTATERGLARPERLAARFAAKEAVAKVLGAPPGLEWHDTEVVLGTGGRPSLRIIGTVAAAAARLGIASWHLSLTHDGGVAVAMVVAET</sequence>